<feature type="chain" id="PRO_1000095039" description="33 kDa chaperonin">
    <location>
        <begin position="1"/>
        <end position="290"/>
    </location>
</feature>
<feature type="disulfide bond" description="Redox-active" evidence="1">
    <location>
        <begin position="231"/>
        <end position="233"/>
    </location>
</feature>
<feature type="disulfide bond" description="Redox-active" evidence="1">
    <location>
        <begin position="263"/>
        <end position="266"/>
    </location>
</feature>
<organism>
    <name type="scientific">Thermotoga sp. (strain RQ2)</name>
    <dbReference type="NCBI Taxonomy" id="126740"/>
    <lineage>
        <taxon>Bacteria</taxon>
        <taxon>Thermotogati</taxon>
        <taxon>Thermotogota</taxon>
        <taxon>Thermotogae</taxon>
        <taxon>Thermotogales</taxon>
        <taxon>Thermotogaceae</taxon>
        <taxon>Thermotoga</taxon>
    </lineage>
</organism>
<gene>
    <name evidence="1" type="primary">hslO</name>
    <name type="ordered locus">TRQ2_1435</name>
</gene>
<accession>B1LBT1</accession>
<dbReference type="EMBL" id="CP000969">
    <property type="protein sequence ID" value="ACB09779.1"/>
    <property type="molecule type" value="Genomic_DNA"/>
</dbReference>
<dbReference type="RefSeq" id="WP_012311127.1">
    <property type="nucleotide sequence ID" value="NC_010483.1"/>
</dbReference>
<dbReference type="SMR" id="B1LBT1"/>
<dbReference type="KEGG" id="trq:TRQ2_1435"/>
<dbReference type="HOGENOM" id="CLU_054493_1_0_0"/>
<dbReference type="Proteomes" id="UP000001687">
    <property type="component" value="Chromosome"/>
</dbReference>
<dbReference type="GO" id="GO:0005737">
    <property type="term" value="C:cytoplasm"/>
    <property type="evidence" value="ECO:0007669"/>
    <property type="project" value="UniProtKB-SubCell"/>
</dbReference>
<dbReference type="GO" id="GO:0044183">
    <property type="term" value="F:protein folding chaperone"/>
    <property type="evidence" value="ECO:0007669"/>
    <property type="project" value="TreeGrafter"/>
</dbReference>
<dbReference type="GO" id="GO:0051082">
    <property type="term" value="F:unfolded protein binding"/>
    <property type="evidence" value="ECO:0007669"/>
    <property type="project" value="UniProtKB-UniRule"/>
</dbReference>
<dbReference type="GO" id="GO:0042026">
    <property type="term" value="P:protein refolding"/>
    <property type="evidence" value="ECO:0007669"/>
    <property type="project" value="TreeGrafter"/>
</dbReference>
<dbReference type="CDD" id="cd00498">
    <property type="entry name" value="Hsp33"/>
    <property type="match status" value="1"/>
</dbReference>
<dbReference type="Gene3D" id="3.55.30.10">
    <property type="entry name" value="Hsp33 domain"/>
    <property type="match status" value="1"/>
</dbReference>
<dbReference type="Gene3D" id="3.90.1280.10">
    <property type="entry name" value="HSP33 redox switch-like"/>
    <property type="match status" value="1"/>
</dbReference>
<dbReference type="HAMAP" id="MF_00117">
    <property type="entry name" value="HslO"/>
    <property type="match status" value="1"/>
</dbReference>
<dbReference type="InterPro" id="IPR000397">
    <property type="entry name" value="Heat_shock_Hsp33"/>
</dbReference>
<dbReference type="InterPro" id="IPR016154">
    <property type="entry name" value="Heat_shock_Hsp33_C"/>
</dbReference>
<dbReference type="InterPro" id="IPR016153">
    <property type="entry name" value="Heat_shock_Hsp33_N"/>
</dbReference>
<dbReference type="NCBIfam" id="NF001033">
    <property type="entry name" value="PRK00114.1"/>
    <property type="match status" value="1"/>
</dbReference>
<dbReference type="PANTHER" id="PTHR30111">
    <property type="entry name" value="33 KDA CHAPERONIN"/>
    <property type="match status" value="1"/>
</dbReference>
<dbReference type="PANTHER" id="PTHR30111:SF1">
    <property type="entry name" value="33 KDA CHAPERONIN"/>
    <property type="match status" value="1"/>
</dbReference>
<dbReference type="Pfam" id="PF01430">
    <property type="entry name" value="HSP33"/>
    <property type="match status" value="1"/>
</dbReference>
<dbReference type="PIRSF" id="PIRSF005261">
    <property type="entry name" value="Heat_shock_Hsp33"/>
    <property type="match status" value="1"/>
</dbReference>
<dbReference type="SUPFAM" id="SSF64397">
    <property type="entry name" value="Hsp33 domain"/>
    <property type="match status" value="1"/>
</dbReference>
<dbReference type="SUPFAM" id="SSF118352">
    <property type="entry name" value="HSP33 redox switch-like"/>
    <property type="match status" value="1"/>
</dbReference>
<comment type="function">
    <text evidence="1">Redox regulated molecular chaperone. Protects both thermally unfolding and oxidatively damaged proteins from irreversible aggregation. Plays an important role in the bacterial defense system toward oxidative stress.</text>
</comment>
<comment type="subcellular location">
    <subcellularLocation>
        <location evidence="1">Cytoplasm</location>
    </subcellularLocation>
</comment>
<comment type="PTM">
    <text evidence="1">Under oxidizing conditions two disulfide bonds are formed involving the reactive cysteines. Under reducing conditions zinc is bound to the reactive cysteines and the protein is inactive.</text>
</comment>
<comment type="similarity">
    <text evidence="1">Belongs to the HSP33 family.</text>
</comment>
<sequence>MIYYGTMFDHKVRFSIVRMREVVEEARNRHVLSYLATVVLGRALIGAALVTPWLAEKERWTLDIEGSGPIRRVVAQSTSEFTVRGYVANPKVELPLNEKGKFDVAGAIGQGVLRVVRDLGLKTPFVSQVPLVSGEIAEDLAYYFAVSEQIPSAFSIGVLVDSGGVKIAGGFAVQIIDRTLEQEKVELIERNIKNLPYITELFQKAEPLDVLERIFGEKVGFVETAEIRYKCDCNREKAKNALLVLDKKELEDMRKEGKGEVVCKWCNTKYVFSEEELEELLKFKVDNSGS</sequence>
<reference key="1">
    <citation type="journal article" date="2011" name="J. Bacteriol.">
        <title>Genome sequence of Thermotoga sp. strain RQ2, a hyperthermophilic bacterium isolated from a geothermally heated region of the seafloor near Ribeira Quente, the Azores.</title>
        <authorList>
            <person name="Swithers K.S."/>
            <person name="DiPippo J.L."/>
            <person name="Bruce D.C."/>
            <person name="Detter C."/>
            <person name="Tapia R."/>
            <person name="Han S."/>
            <person name="Saunders E."/>
            <person name="Goodwin L.A."/>
            <person name="Han J."/>
            <person name="Woyke T."/>
            <person name="Pitluck S."/>
            <person name="Pennacchio L."/>
            <person name="Nolan M."/>
            <person name="Mikhailova N."/>
            <person name="Lykidis A."/>
            <person name="Land M.L."/>
            <person name="Brettin T."/>
            <person name="Stetter K.O."/>
            <person name="Nelson K.E."/>
            <person name="Gogarten J.P."/>
            <person name="Noll K.M."/>
        </authorList>
    </citation>
    <scope>NUCLEOTIDE SEQUENCE [LARGE SCALE GENOMIC DNA]</scope>
    <source>
        <strain>RQ2</strain>
    </source>
</reference>
<protein>
    <recommendedName>
        <fullName evidence="1">33 kDa chaperonin</fullName>
    </recommendedName>
    <alternativeName>
        <fullName evidence="1">Heat shock protein 33 homolog</fullName>
        <shortName evidence="1">HSP33</shortName>
    </alternativeName>
</protein>
<proteinExistence type="inferred from homology"/>
<name>HSLO_THESQ</name>
<evidence type="ECO:0000255" key="1">
    <source>
        <dbReference type="HAMAP-Rule" id="MF_00117"/>
    </source>
</evidence>
<keyword id="KW-0143">Chaperone</keyword>
<keyword id="KW-0963">Cytoplasm</keyword>
<keyword id="KW-1015">Disulfide bond</keyword>
<keyword id="KW-0676">Redox-active center</keyword>
<keyword id="KW-0862">Zinc</keyword>